<reference key="1">
    <citation type="journal article" date="2002" name="Nature">
        <title>Genome sequence of the plant pathogen Ralstonia solanacearum.</title>
        <authorList>
            <person name="Salanoubat M."/>
            <person name="Genin S."/>
            <person name="Artiguenave F."/>
            <person name="Gouzy J."/>
            <person name="Mangenot S."/>
            <person name="Arlat M."/>
            <person name="Billault A."/>
            <person name="Brottier P."/>
            <person name="Camus J.-C."/>
            <person name="Cattolico L."/>
            <person name="Chandler M."/>
            <person name="Choisne N."/>
            <person name="Claudel-Renard C."/>
            <person name="Cunnac S."/>
            <person name="Demange N."/>
            <person name="Gaspin C."/>
            <person name="Lavie M."/>
            <person name="Moisan A."/>
            <person name="Robert C."/>
            <person name="Saurin W."/>
            <person name="Schiex T."/>
            <person name="Siguier P."/>
            <person name="Thebault P."/>
            <person name="Whalen M."/>
            <person name="Wincker P."/>
            <person name="Levy M."/>
            <person name="Weissenbach J."/>
            <person name="Boucher C.A."/>
        </authorList>
    </citation>
    <scope>NUCLEOTIDE SEQUENCE [LARGE SCALE GENOMIC DNA]</scope>
    <source>
        <strain>ATCC BAA-1114 / GMI1000</strain>
    </source>
</reference>
<comment type="function">
    <text evidence="1">Catalyzes the methylation of C-1 in cobalt-precorrin-5B to form cobalt-precorrin-6A.</text>
</comment>
<comment type="catalytic activity">
    <reaction evidence="1">
        <text>Co-precorrin-5B + S-adenosyl-L-methionine = Co-precorrin-6A + S-adenosyl-L-homocysteine</text>
        <dbReference type="Rhea" id="RHEA:26285"/>
        <dbReference type="ChEBI" id="CHEBI:57856"/>
        <dbReference type="ChEBI" id="CHEBI:59789"/>
        <dbReference type="ChEBI" id="CHEBI:60063"/>
        <dbReference type="ChEBI" id="CHEBI:60064"/>
        <dbReference type="EC" id="2.1.1.195"/>
    </reaction>
</comment>
<comment type="pathway">
    <text evidence="1">Cofactor biosynthesis; adenosylcobalamin biosynthesis; cob(II)yrinate a,c-diamide from sirohydrochlorin (anaerobic route): step 6/10.</text>
</comment>
<comment type="similarity">
    <text evidence="1">Belongs to the CbiD family.</text>
</comment>
<name>CBID_RALN1</name>
<proteinExistence type="inferred from homology"/>
<sequence length="383" mass="40107">MQPSARRPFDLATPAPNGLRRGRTTGTCATAAVKAALLRLVRGETVDAVEVSLPDPDYCLEVPIARIEPLASGAVRADVLKYAGDDPDNTDGATIFAEVSVNHAGEVRFMAAPGVGTVTQPGLRVPPGEPAINPVPRQMMRMAVDEVLAGGANPGFDLAIGCVDGERIARRTFNPMLGIVGGISILGTSGIVEPMSLAAWMASIEVYVRVALGDAPEAIAFTPGKIGRAYAAHPLALSKKQVVQIANFIGASLDYAQTALEEDRHRLGTLWVLGHPGKLAKVLDGVWDTHSSKSGMAMGSVAAVAAELGVAAALVEQIKTANTVENVIQILQHQPGAQAFWTEIEQRIAARMQPRVPRADRVAVRLFAMDGTPLGAAGQEAGA</sequence>
<gene>
    <name evidence="1" type="primary">cbiD</name>
    <name type="ordered locus">RSp0622</name>
    <name type="ORF">RS03745</name>
</gene>
<keyword id="KW-0169">Cobalamin biosynthesis</keyword>
<keyword id="KW-0489">Methyltransferase</keyword>
<keyword id="KW-0614">Plasmid</keyword>
<keyword id="KW-1185">Reference proteome</keyword>
<keyword id="KW-0949">S-adenosyl-L-methionine</keyword>
<keyword id="KW-0808">Transferase</keyword>
<feature type="chain" id="PRO_0000141681" description="Cobalt-precorrin-5B C(1)-methyltransferase">
    <location>
        <begin position="1"/>
        <end position="383"/>
    </location>
</feature>
<feature type="region of interest" description="Disordered" evidence="2">
    <location>
        <begin position="1"/>
        <end position="24"/>
    </location>
</feature>
<protein>
    <recommendedName>
        <fullName evidence="1">Cobalt-precorrin-5B C(1)-methyltransferase</fullName>
        <ecNumber evidence="1">2.1.1.195</ecNumber>
    </recommendedName>
    <alternativeName>
        <fullName evidence="1">Cobalt-precorrin-6A synthase</fullName>
    </alternativeName>
</protein>
<accession>Q8XS59</accession>
<dbReference type="EC" id="2.1.1.195" evidence="1"/>
<dbReference type="EMBL" id="AL646053">
    <property type="protein sequence ID" value="CAD17773.1"/>
    <property type="molecule type" value="Genomic_DNA"/>
</dbReference>
<dbReference type="RefSeq" id="WP_011003920.1">
    <property type="nucleotide sequence ID" value="NC_003296.1"/>
</dbReference>
<dbReference type="SMR" id="Q8XS59"/>
<dbReference type="STRING" id="267608.RSp0622"/>
<dbReference type="EnsemblBacteria" id="CAD17773">
    <property type="protein sequence ID" value="CAD17773"/>
    <property type="gene ID" value="RSp0622"/>
</dbReference>
<dbReference type="KEGG" id="rso:RSp0622"/>
<dbReference type="PATRIC" id="fig|267608.8.peg.4092"/>
<dbReference type="eggNOG" id="COG1903">
    <property type="taxonomic scope" value="Bacteria"/>
</dbReference>
<dbReference type="HOGENOM" id="CLU_041273_1_0_4"/>
<dbReference type="UniPathway" id="UPA00148">
    <property type="reaction ID" value="UER00227"/>
</dbReference>
<dbReference type="Proteomes" id="UP000001436">
    <property type="component" value="Plasmid megaplasmid Rsp"/>
</dbReference>
<dbReference type="GO" id="GO:0043780">
    <property type="term" value="F:cobalt-precorrin-5B C1-methyltransferase activity"/>
    <property type="evidence" value="ECO:0007669"/>
    <property type="project" value="RHEA"/>
</dbReference>
<dbReference type="GO" id="GO:0019251">
    <property type="term" value="P:anaerobic cobalamin biosynthetic process"/>
    <property type="evidence" value="ECO:0007669"/>
    <property type="project" value="UniProtKB-UniRule"/>
</dbReference>
<dbReference type="GO" id="GO:0032259">
    <property type="term" value="P:methylation"/>
    <property type="evidence" value="ECO:0007669"/>
    <property type="project" value="UniProtKB-KW"/>
</dbReference>
<dbReference type="Gene3D" id="3.30.2110.10">
    <property type="entry name" value="CbiD-like"/>
    <property type="match status" value="1"/>
</dbReference>
<dbReference type="HAMAP" id="MF_00787">
    <property type="entry name" value="CbiD"/>
    <property type="match status" value="1"/>
</dbReference>
<dbReference type="InterPro" id="IPR002748">
    <property type="entry name" value="CbiD"/>
</dbReference>
<dbReference type="InterPro" id="IPR036074">
    <property type="entry name" value="CbiD_sf"/>
</dbReference>
<dbReference type="NCBIfam" id="TIGR00312">
    <property type="entry name" value="cbiD"/>
    <property type="match status" value="1"/>
</dbReference>
<dbReference type="PANTHER" id="PTHR35863">
    <property type="entry name" value="COBALT-PRECORRIN-5B C(1)-METHYLTRANSFERASE"/>
    <property type="match status" value="1"/>
</dbReference>
<dbReference type="PANTHER" id="PTHR35863:SF1">
    <property type="entry name" value="COBALT-PRECORRIN-5B C(1)-METHYLTRANSFERASE"/>
    <property type="match status" value="1"/>
</dbReference>
<dbReference type="Pfam" id="PF01888">
    <property type="entry name" value="CbiD"/>
    <property type="match status" value="1"/>
</dbReference>
<dbReference type="PIRSF" id="PIRSF026782">
    <property type="entry name" value="CbiD"/>
    <property type="match status" value="1"/>
</dbReference>
<dbReference type="SUPFAM" id="SSF111342">
    <property type="entry name" value="CbiD-like"/>
    <property type="match status" value="1"/>
</dbReference>
<evidence type="ECO:0000255" key="1">
    <source>
        <dbReference type="HAMAP-Rule" id="MF_00787"/>
    </source>
</evidence>
<evidence type="ECO:0000256" key="2">
    <source>
        <dbReference type="SAM" id="MobiDB-lite"/>
    </source>
</evidence>
<geneLocation type="plasmid">
    <name>megaplasmid Rsp</name>
</geneLocation>
<organism>
    <name type="scientific">Ralstonia nicotianae (strain ATCC BAA-1114 / GMI1000)</name>
    <name type="common">Ralstonia solanacearum</name>
    <dbReference type="NCBI Taxonomy" id="267608"/>
    <lineage>
        <taxon>Bacteria</taxon>
        <taxon>Pseudomonadati</taxon>
        <taxon>Pseudomonadota</taxon>
        <taxon>Betaproteobacteria</taxon>
        <taxon>Burkholderiales</taxon>
        <taxon>Burkholderiaceae</taxon>
        <taxon>Ralstonia</taxon>
        <taxon>Ralstonia solanacearum species complex</taxon>
    </lineage>
</organism>